<accession>Q5R7N8</accession>
<proteinExistence type="inferred from homology"/>
<name>DPH3_PONAB</name>
<protein>
    <recommendedName>
        <fullName evidence="4">Diphthamide biosynthesis protein 3</fullName>
    </recommendedName>
    <alternativeName>
        <fullName>CSL-type zinc finger-containing protein 2</fullName>
    </alternativeName>
</protein>
<reference key="1">
    <citation type="submission" date="2004-11" db="EMBL/GenBank/DDBJ databases">
        <authorList>
            <consortium name="The German cDNA consortium"/>
        </authorList>
    </citation>
    <scope>NUCLEOTIDE SEQUENCE [LARGE SCALE MRNA]</scope>
    <source>
        <tissue>Kidney</tissue>
    </source>
</reference>
<gene>
    <name type="primary">DPH3</name>
    <name type="synonym">ZCSL2</name>
</gene>
<organism>
    <name type="scientific">Pongo abelii</name>
    <name type="common">Sumatran orangutan</name>
    <name type="synonym">Pongo pygmaeus abelii</name>
    <dbReference type="NCBI Taxonomy" id="9601"/>
    <lineage>
        <taxon>Eukaryota</taxon>
        <taxon>Metazoa</taxon>
        <taxon>Chordata</taxon>
        <taxon>Craniata</taxon>
        <taxon>Vertebrata</taxon>
        <taxon>Euteleostomi</taxon>
        <taxon>Mammalia</taxon>
        <taxon>Eutheria</taxon>
        <taxon>Euarchontoglires</taxon>
        <taxon>Primates</taxon>
        <taxon>Haplorrhini</taxon>
        <taxon>Catarrhini</taxon>
        <taxon>Hominidae</taxon>
        <taxon>Pongo</taxon>
    </lineage>
</organism>
<dbReference type="EMBL" id="CR860074">
    <property type="protein sequence ID" value="CAH92222.1"/>
    <property type="molecule type" value="mRNA"/>
</dbReference>
<dbReference type="RefSeq" id="NP_001126299.1">
    <property type="nucleotide sequence ID" value="NM_001132827.1"/>
</dbReference>
<dbReference type="BMRB" id="Q5R7N8"/>
<dbReference type="SMR" id="Q5R7N8"/>
<dbReference type="FunCoup" id="Q5R7N8">
    <property type="interactions" value="3236"/>
</dbReference>
<dbReference type="STRING" id="9601.ENSPPYP00000015754"/>
<dbReference type="Ensembl" id="ENSPPYT00000016376.3">
    <property type="protein sequence ID" value="ENSPPYP00000015754.2"/>
    <property type="gene ID" value="ENSPPYG00000014083.3"/>
</dbReference>
<dbReference type="GeneID" id="100173277"/>
<dbReference type="KEGG" id="pon:100173277"/>
<dbReference type="CTD" id="285381"/>
<dbReference type="eggNOG" id="KOG2923">
    <property type="taxonomic scope" value="Eukaryota"/>
</dbReference>
<dbReference type="GeneTree" id="ENSGT00390000007225"/>
<dbReference type="HOGENOM" id="CLU_155991_3_0_1"/>
<dbReference type="InParanoid" id="Q5R7N8"/>
<dbReference type="OrthoDB" id="66964at2759"/>
<dbReference type="TreeFam" id="TF315102"/>
<dbReference type="UniPathway" id="UPA00559"/>
<dbReference type="Proteomes" id="UP000001595">
    <property type="component" value="Chromosome 3"/>
</dbReference>
<dbReference type="GO" id="GO:0005737">
    <property type="term" value="C:cytoplasm"/>
    <property type="evidence" value="ECO:0007669"/>
    <property type="project" value="UniProtKB-SubCell"/>
</dbReference>
<dbReference type="GO" id="GO:0005634">
    <property type="term" value="C:nucleus"/>
    <property type="evidence" value="ECO:0007669"/>
    <property type="project" value="UniProtKB-SubCell"/>
</dbReference>
<dbReference type="GO" id="GO:0008198">
    <property type="term" value="F:ferrous iron binding"/>
    <property type="evidence" value="ECO:0000250"/>
    <property type="project" value="UniProtKB"/>
</dbReference>
<dbReference type="GO" id="GO:0034986">
    <property type="term" value="F:iron chaperone activity"/>
    <property type="evidence" value="ECO:0000250"/>
    <property type="project" value="UniProtKB"/>
</dbReference>
<dbReference type="GO" id="GO:0017183">
    <property type="term" value="P:protein histidyl modification to diphthamide"/>
    <property type="evidence" value="ECO:0000250"/>
    <property type="project" value="UniProtKB"/>
</dbReference>
<dbReference type="GO" id="GO:0002926">
    <property type="term" value="P:tRNA wobble base 5-methoxycarbonylmethyl-2-thiouridinylation"/>
    <property type="evidence" value="ECO:0000250"/>
    <property type="project" value="UniProtKB"/>
</dbReference>
<dbReference type="FunFam" id="3.10.660.10:FF:000001">
    <property type="entry name" value="Diphthamide biosynthesis 3"/>
    <property type="match status" value="1"/>
</dbReference>
<dbReference type="Gene3D" id="3.10.660.10">
    <property type="entry name" value="DPH Zinc finger"/>
    <property type="match status" value="1"/>
</dbReference>
<dbReference type="InterPro" id="IPR044248">
    <property type="entry name" value="DPH3/4-like"/>
</dbReference>
<dbReference type="InterPro" id="IPR007872">
    <property type="entry name" value="DPH_MB_dom"/>
</dbReference>
<dbReference type="InterPro" id="IPR036671">
    <property type="entry name" value="DPH_MB_sf"/>
</dbReference>
<dbReference type="PANTHER" id="PTHR21454:SF31">
    <property type="entry name" value="DIPHTHAMIDE BIOSYNTHESIS PROTEIN 3"/>
    <property type="match status" value="1"/>
</dbReference>
<dbReference type="PANTHER" id="PTHR21454">
    <property type="entry name" value="DPH3 HOMOLOG-RELATED"/>
    <property type="match status" value="1"/>
</dbReference>
<dbReference type="Pfam" id="PF05207">
    <property type="entry name" value="Zn_ribbon_CSL"/>
    <property type="match status" value="1"/>
</dbReference>
<dbReference type="SUPFAM" id="SSF144217">
    <property type="entry name" value="CSL zinc finger"/>
    <property type="match status" value="1"/>
</dbReference>
<dbReference type="PROSITE" id="PS51074">
    <property type="entry name" value="DPH_MB"/>
    <property type="match status" value="1"/>
</dbReference>
<feature type="chain" id="PRO_0000260222" description="Diphthamide biosynthesis protein 3">
    <location>
        <begin position="1"/>
        <end position="82"/>
    </location>
</feature>
<feature type="domain" description="DPH-type MB" evidence="3">
    <location>
        <begin position="4"/>
        <end position="60"/>
    </location>
</feature>
<feature type="binding site" evidence="2">
    <location>
        <position position="26"/>
    </location>
    <ligand>
        <name>Fe cation</name>
        <dbReference type="ChEBI" id="CHEBI:24875"/>
    </ligand>
</feature>
<feature type="binding site" evidence="2">
    <location>
        <position position="28"/>
    </location>
    <ligand>
        <name>Fe cation</name>
        <dbReference type="ChEBI" id="CHEBI:24875"/>
    </ligand>
</feature>
<feature type="binding site" evidence="2">
    <location>
        <position position="48"/>
    </location>
    <ligand>
        <name>Fe cation</name>
        <dbReference type="ChEBI" id="CHEBI:24875"/>
    </ligand>
</feature>
<feature type="binding site" evidence="2">
    <location>
        <position position="51"/>
    </location>
    <ligand>
        <name>Fe cation</name>
        <dbReference type="ChEBI" id="CHEBI:24875"/>
    </ligand>
</feature>
<comment type="function">
    <text evidence="1">Required for the first step of diphthamide biosynthesis, a post-translational modification of histidine which occurs in elongation factor 2. DPH1 and DPH2 transfer a 3-amino-3-carboxypropyl (ACP) group from S-adenosyl-L-methionine (SAM) to a histidine residue, the reaction is assisted by a reduction system comprising DPH3 and a NADH-dependent reductase. Acts as an electron donor to reduce the Fe-S cluster in DPH1-DPH2 keeping the [4Fe-4S] clusters in the active and reduced state. Restores iron to DPH1-DPH2 iron-sulfur clusters which have degraded from [4Fe-4S] to [3Fe-4S] by donating an iron atom to reform [4Fe-4S] clusters, in a manner dependent on the presence of elongation factor 2 and SAM. Associates with the elongator complex and is required for tRNA Wobble base modifications mediated by the elongator complex. The elongator complex is required for multiple tRNA modifications, including mcm5U (5-methoxycarbonylmethyl uridine), mcm5s 2U (5-methoxycarbonylmethyl-2-thiouridine), and ncm5U (5-carbamoylmethyl uridine).</text>
</comment>
<comment type="catalytic activity">
    <reaction evidence="1">
        <text>[3Fe-4S](1+)-[protein] + Fe(2+)-[Dph3] = [3Fe-4S](0)-[protein] + Fe(3+)-[Dph3]</text>
        <dbReference type="Rhea" id="RHEA:71235"/>
        <dbReference type="Rhea" id="RHEA-COMP:17996"/>
        <dbReference type="Rhea" id="RHEA-COMP:17997"/>
        <dbReference type="Rhea" id="RHEA-COMP:18002"/>
        <dbReference type="Rhea" id="RHEA-COMP:18003"/>
        <dbReference type="ChEBI" id="CHEBI:29033"/>
        <dbReference type="ChEBI" id="CHEBI:29034"/>
        <dbReference type="ChEBI" id="CHEBI:33751"/>
        <dbReference type="ChEBI" id="CHEBI:47402"/>
        <dbReference type="ChEBI" id="CHEBI:83228"/>
    </reaction>
</comment>
<comment type="catalytic activity">
    <reaction evidence="1">
        <text>2 [3Fe-4S](0)-[protein] + 2 Fe(2+)-[Dph3] + NADH = 2 [4Fe-4S](1+)-[protein] + 2 [Dph3] + NAD(+) + H(+)</text>
        <dbReference type="Rhea" id="RHEA:71239"/>
        <dbReference type="Rhea" id="RHEA-COMP:17997"/>
        <dbReference type="Rhea" id="RHEA-COMP:17998"/>
        <dbReference type="Rhea" id="RHEA-COMP:18001"/>
        <dbReference type="Rhea" id="RHEA-COMP:18002"/>
        <dbReference type="ChEBI" id="CHEBI:15378"/>
        <dbReference type="ChEBI" id="CHEBI:29033"/>
        <dbReference type="ChEBI" id="CHEBI:33723"/>
        <dbReference type="ChEBI" id="CHEBI:47402"/>
        <dbReference type="ChEBI" id="CHEBI:57540"/>
        <dbReference type="ChEBI" id="CHEBI:57945"/>
        <dbReference type="ChEBI" id="CHEBI:83228"/>
    </reaction>
</comment>
<comment type="cofactor">
    <cofactor evidence="1">
        <name>Fe(2+)</name>
        <dbReference type="ChEBI" id="CHEBI:29033"/>
    </cofactor>
</comment>
<comment type="pathway">
    <text evidence="4">Protein modification; peptidyl-diphthamide biosynthesis.</text>
</comment>
<comment type="subunit">
    <text evidence="1 2">Component of the 2-(3-amino-3-carboxypropyl)histidine synthase complex composed of DPH1, DPH2, DPH3 and a NADH-dependent reductase (By similarity). Interacts with SERGEF (By similarity).</text>
</comment>
<comment type="subcellular location">
    <subcellularLocation>
        <location evidence="2">Cytoplasm</location>
    </subcellularLocation>
    <subcellularLocation>
        <location evidence="2">Nucleus</location>
    </subcellularLocation>
</comment>
<comment type="domain">
    <text evidence="1">The DPH-type metal-binding (MB) domain can also bind zinc. However, iron is the physiological binding partner as zinc binding impairs the protein electron donor function.</text>
</comment>
<comment type="similarity">
    <text evidence="4">Belongs to the DPH3 family.</text>
</comment>
<keyword id="KW-0963">Cytoplasm</keyword>
<keyword id="KW-0408">Iron</keyword>
<keyword id="KW-0479">Metal-binding</keyword>
<keyword id="KW-0539">Nucleus</keyword>
<keyword id="KW-1185">Reference proteome</keyword>
<evidence type="ECO:0000250" key="1">
    <source>
        <dbReference type="UniProtKB" id="Q3E840"/>
    </source>
</evidence>
<evidence type="ECO:0000250" key="2">
    <source>
        <dbReference type="UniProtKB" id="Q96FX2"/>
    </source>
</evidence>
<evidence type="ECO:0000255" key="3">
    <source>
        <dbReference type="PROSITE-ProRule" id="PRU00456"/>
    </source>
</evidence>
<evidence type="ECO:0000305" key="4"/>
<sequence length="82" mass="9240">MAVFHDEVEIEDFQYDEDSETYFYPCPCGDNFSITKEDLENGEDVATCPSCSLIIKVIYDKDQFVCGETVPAPSANKELVKC</sequence>